<sequence length="322" mass="35800">MDNFLALTLTGKKPVITEREINGVRWRWLGDGVLELTPLTPPQGALVISAGIHGNETAPVEMLDALLGAISHGEIPLRWRLLVILGNPPALKQGKRYCHSDMNRMFGGRWQLFAESGETCRARELEQCLEDFYDQGKESVRWHLDLHTAIRGSLHPQFGVLPQRDIPWDEKFLTWLGAAGLEALVFHQEPGGTFTHFSARHFGALACTLELGKALPFGQNDLRQFAVTASAIAALLSGESVGIVRTPPLRYRVVSQITRHSPSFEMHMASDTLNFMPFEKGTLLAQDGEERFTVTHDVEYVLFPNPLVALGLRAGLMLEKIS</sequence>
<gene>
    <name evidence="1" type="primary">astE</name>
    <name type="ordered locus">BWG_1557</name>
</gene>
<keyword id="KW-0056">Arginine metabolism</keyword>
<keyword id="KW-0378">Hydrolase</keyword>
<keyword id="KW-0479">Metal-binding</keyword>
<keyword id="KW-0862">Zinc</keyword>
<feature type="chain" id="PRO_1000212894" description="Succinylglutamate desuccinylase">
    <location>
        <begin position="1"/>
        <end position="322"/>
    </location>
</feature>
<feature type="active site" evidence="1">
    <location>
        <position position="210"/>
    </location>
</feature>
<feature type="binding site" evidence="1">
    <location>
        <position position="53"/>
    </location>
    <ligand>
        <name>Zn(2+)</name>
        <dbReference type="ChEBI" id="CHEBI:29105"/>
    </ligand>
</feature>
<feature type="binding site" evidence="1">
    <location>
        <position position="56"/>
    </location>
    <ligand>
        <name>Zn(2+)</name>
        <dbReference type="ChEBI" id="CHEBI:29105"/>
    </ligand>
</feature>
<feature type="binding site" evidence="1">
    <location>
        <position position="147"/>
    </location>
    <ligand>
        <name>Zn(2+)</name>
        <dbReference type="ChEBI" id="CHEBI:29105"/>
    </ligand>
</feature>
<proteinExistence type="inferred from homology"/>
<comment type="function">
    <text evidence="1">Transforms N(2)-succinylglutamate into succinate and glutamate.</text>
</comment>
<comment type="catalytic activity">
    <reaction evidence="1">
        <text>N-succinyl-L-glutamate + H2O = L-glutamate + succinate</text>
        <dbReference type="Rhea" id="RHEA:15169"/>
        <dbReference type="ChEBI" id="CHEBI:15377"/>
        <dbReference type="ChEBI" id="CHEBI:29985"/>
        <dbReference type="ChEBI" id="CHEBI:30031"/>
        <dbReference type="ChEBI" id="CHEBI:58763"/>
        <dbReference type="EC" id="3.5.1.96"/>
    </reaction>
</comment>
<comment type="cofactor">
    <cofactor evidence="1">
        <name>Zn(2+)</name>
        <dbReference type="ChEBI" id="CHEBI:29105"/>
    </cofactor>
    <text evidence="1">Binds 1 zinc ion per subunit.</text>
</comment>
<comment type="pathway">
    <text evidence="1">Amino-acid degradation; L-arginine degradation via AST pathway; L-glutamate and succinate from L-arginine: step 5/5.</text>
</comment>
<comment type="similarity">
    <text evidence="1">Belongs to the AspA/AstE family. Succinylglutamate desuccinylase subfamily.</text>
</comment>
<accession>C4ZZA0</accession>
<reference key="1">
    <citation type="journal article" date="2009" name="J. Bacteriol.">
        <title>Genomic sequencing reveals regulatory mutations and recombinational events in the widely used MC4100 lineage of Escherichia coli K-12.</title>
        <authorList>
            <person name="Ferenci T."/>
            <person name="Zhou Z."/>
            <person name="Betteridge T."/>
            <person name="Ren Y."/>
            <person name="Liu Y."/>
            <person name="Feng L."/>
            <person name="Reeves P.R."/>
            <person name="Wang L."/>
        </authorList>
    </citation>
    <scope>NUCLEOTIDE SEQUENCE [LARGE SCALE GENOMIC DNA]</scope>
    <source>
        <strain>K12 / MC4100 / BW2952</strain>
    </source>
</reference>
<organism>
    <name type="scientific">Escherichia coli (strain K12 / MC4100 / BW2952)</name>
    <dbReference type="NCBI Taxonomy" id="595496"/>
    <lineage>
        <taxon>Bacteria</taxon>
        <taxon>Pseudomonadati</taxon>
        <taxon>Pseudomonadota</taxon>
        <taxon>Gammaproteobacteria</taxon>
        <taxon>Enterobacterales</taxon>
        <taxon>Enterobacteriaceae</taxon>
        <taxon>Escherichia</taxon>
    </lineage>
</organism>
<protein>
    <recommendedName>
        <fullName evidence="1">Succinylglutamate desuccinylase</fullName>
        <ecNumber evidence="1">3.5.1.96</ecNumber>
    </recommendedName>
</protein>
<dbReference type="EC" id="3.5.1.96" evidence="1"/>
<dbReference type="EMBL" id="CP001396">
    <property type="protein sequence ID" value="ACR65592.1"/>
    <property type="molecule type" value="Genomic_DNA"/>
</dbReference>
<dbReference type="RefSeq" id="WP_000368506.1">
    <property type="nucleotide sequence ID" value="NC_012759.1"/>
</dbReference>
<dbReference type="SMR" id="C4ZZA0"/>
<dbReference type="KEGG" id="ebw:BWG_1557"/>
<dbReference type="HOGENOM" id="CLU_071608_0_0_6"/>
<dbReference type="UniPathway" id="UPA00185">
    <property type="reaction ID" value="UER00283"/>
</dbReference>
<dbReference type="GO" id="GO:0016788">
    <property type="term" value="F:hydrolase activity, acting on ester bonds"/>
    <property type="evidence" value="ECO:0007669"/>
    <property type="project" value="UniProtKB-UniRule"/>
</dbReference>
<dbReference type="GO" id="GO:0009017">
    <property type="term" value="F:succinylglutamate desuccinylase activity"/>
    <property type="evidence" value="ECO:0007669"/>
    <property type="project" value="UniProtKB-EC"/>
</dbReference>
<dbReference type="GO" id="GO:0008270">
    <property type="term" value="F:zinc ion binding"/>
    <property type="evidence" value="ECO:0007669"/>
    <property type="project" value="UniProtKB-UniRule"/>
</dbReference>
<dbReference type="GO" id="GO:0019544">
    <property type="term" value="P:arginine catabolic process to glutamate"/>
    <property type="evidence" value="ECO:0007669"/>
    <property type="project" value="UniProtKB-UniRule"/>
</dbReference>
<dbReference type="GO" id="GO:0019545">
    <property type="term" value="P:arginine catabolic process to succinate"/>
    <property type="evidence" value="ECO:0007669"/>
    <property type="project" value="UniProtKB-UniRule"/>
</dbReference>
<dbReference type="CDD" id="cd03855">
    <property type="entry name" value="M14_ASTE"/>
    <property type="match status" value="1"/>
</dbReference>
<dbReference type="FunFam" id="3.40.630.10:FF:000017">
    <property type="entry name" value="Succinylglutamate desuccinylase"/>
    <property type="match status" value="1"/>
</dbReference>
<dbReference type="Gene3D" id="3.40.630.10">
    <property type="entry name" value="Zn peptidases"/>
    <property type="match status" value="1"/>
</dbReference>
<dbReference type="HAMAP" id="MF_00767">
    <property type="entry name" value="Arg_catab_AstE"/>
    <property type="match status" value="1"/>
</dbReference>
<dbReference type="InterPro" id="IPR050178">
    <property type="entry name" value="AspA/AstE_fam"/>
</dbReference>
<dbReference type="InterPro" id="IPR055438">
    <property type="entry name" value="AstE_AspA_cat"/>
</dbReference>
<dbReference type="InterPro" id="IPR007036">
    <property type="entry name" value="Aste_AspA_hybrid_dom"/>
</dbReference>
<dbReference type="InterPro" id="IPR016681">
    <property type="entry name" value="SuccinylGlu_desuccinylase"/>
</dbReference>
<dbReference type="NCBIfam" id="TIGR03242">
    <property type="entry name" value="arg_catab_astE"/>
    <property type="match status" value="1"/>
</dbReference>
<dbReference type="NCBIfam" id="NF003706">
    <property type="entry name" value="PRK05324.1"/>
    <property type="match status" value="1"/>
</dbReference>
<dbReference type="PANTHER" id="PTHR15162">
    <property type="entry name" value="ASPARTOACYLASE"/>
    <property type="match status" value="1"/>
</dbReference>
<dbReference type="PANTHER" id="PTHR15162:SF7">
    <property type="entry name" value="SUCCINYLGLUTAMATE DESUCCINYLASE"/>
    <property type="match status" value="1"/>
</dbReference>
<dbReference type="Pfam" id="PF24827">
    <property type="entry name" value="AstE_AspA_cat"/>
    <property type="match status" value="1"/>
</dbReference>
<dbReference type="Pfam" id="PF04952">
    <property type="entry name" value="AstE_AspA_hybrid"/>
    <property type="match status" value="1"/>
</dbReference>
<dbReference type="PIRSF" id="PIRSF017020">
    <property type="entry name" value="AstE"/>
    <property type="match status" value="1"/>
</dbReference>
<dbReference type="SUPFAM" id="SSF53187">
    <property type="entry name" value="Zn-dependent exopeptidases"/>
    <property type="match status" value="1"/>
</dbReference>
<evidence type="ECO:0000255" key="1">
    <source>
        <dbReference type="HAMAP-Rule" id="MF_00767"/>
    </source>
</evidence>
<name>ASTE_ECOBW</name>